<keyword id="KW-0002">3D-structure</keyword>
<keyword id="KW-0868">Chloride</keyword>
<keyword id="KW-0903">Direct protein sequencing</keyword>
<keyword id="KW-1015">Disulfide bond</keyword>
<keyword id="KW-0325">Glycoprotein</keyword>
<keyword id="KW-0378">Hydrolase</keyword>
<keyword id="KW-0458">Lysosome</keyword>
<keyword id="KW-0645">Protease</keyword>
<keyword id="KW-1185">Reference proteome</keyword>
<keyword id="KW-0732">Signal</keyword>
<keyword id="KW-0788">Thiol protease</keyword>
<keyword id="KW-0865">Zymogen</keyword>
<protein>
    <recommendedName>
        <fullName>Dipeptidyl peptidase 1</fullName>
        <ecNumber evidence="8">3.4.14.1</ecNumber>
    </recommendedName>
    <alternativeName>
        <fullName>Cathepsin C</fullName>
    </alternativeName>
    <alternativeName>
        <fullName>Cathepsin J</fullName>
    </alternativeName>
    <alternativeName>
        <fullName>Dipeptidyl peptidase I</fullName>
        <shortName>DPP-I</shortName>
        <shortName>DPPI</shortName>
    </alternativeName>
    <alternativeName>
        <fullName>Dipeptidyl transferase</fullName>
    </alternativeName>
    <component>
        <recommendedName>
            <fullName>Dipeptidyl peptidase 1 exclusion domain chain</fullName>
        </recommendedName>
        <alternativeName>
            <fullName>Dipeptidyl peptidase I exclusion domain chain</fullName>
        </alternativeName>
    </component>
    <component>
        <recommendedName>
            <fullName>Dipeptidyl peptidase 1 heavy chain</fullName>
        </recommendedName>
        <alternativeName>
            <fullName>Dipeptidyl peptidase I heavy chain</fullName>
        </alternativeName>
    </component>
    <component>
        <recommendedName>
            <fullName>Dipeptidyl peptidase 1 light chain</fullName>
        </recommendedName>
        <alternativeName>
            <fullName>Dipeptidyl peptidase I light chain</fullName>
        </alternativeName>
    </component>
</protein>
<gene>
    <name type="primary">Ctsc</name>
</gene>
<proteinExistence type="evidence at protein level"/>
<evidence type="ECO:0000250" key="1">
    <source>
        <dbReference type="UniProtKB" id="P53634"/>
    </source>
</evidence>
<evidence type="ECO:0000255" key="2"/>
<evidence type="ECO:0000255" key="3">
    <source>
        <dbReference type="PROSITE-ProRule" id="PRU10088"/>
    </source>
</evidence>
<evidence type="ECO:0000255" key="4">
    <source>
        <dbReference type="PROSITE-ProRule" id="PRU10089"/>
    </source>
</evidence>
<evidence type="ECO:0000255" key="5">
    <source>
        <dbReference type="PROSITE-ProRule" id="PRU10090"/>
    </source>
</evidence>
<evidence type="ECO:0000269" key="6">
    <source>
    </source>
</evidence>
<evidence type="ECO:0000269" key="7">
    <source>
    </source>
</evidence>
<evidence type="ECO:0000269" key="8">
    <source>
    </source>
</evidence>
<evidence type="ECO:0000305" key="9"/>
<evidence type="ECO:0007829" key="10">
    <source>
        <dbReference type="PDB" id="1JQP"/>
    </source>
</evidence>
<organism>
    <name type="scientific">Rattus norvegicus</name>
    <name type="common">Rat</name>
    <dbReference type="NCBI Taxonomy" id="10116"/>
    <lineage>
        <taxon>Eukaryota</taxon>
        <taxon>Metazoa</taxon>
        <taxon>Chordata</taxon>
        <taxon>Craniata</taxon>
        <taxon>Vertebrata</taxon>
        <taxon>Euteleostomi</taxon>
        <taxon>Mammalia</taxon>
        <taxon>Eutheria</taxon>
        <taxon>Euarchontoglires</taxon>
        <taxon>Glires</taxon>
        <taxon>Rodentia</taxon>
        <taxon>Myomorpha</taxon>
        <taxon>Muroidea</taxon>
        <taxon>Muridae</taxon>
        <taxon>Murinae</taxon>
        <taxon>Rattus</taxon>
    </lineage>
</organism>
<feature type="signal peptide" evidence="8">
    <location>
        <begin position="1"/>
        <end position="24"/>
    </location>
</feature>
<feature type="chain" id="PRO_0000026350" description="Dipeptidyl peptidase 1 exclusion domain chain" evidence="1">
    <location>
        <begin position="25"/>
        <end position="134"/>
    </location>
</feature>
<feature type="propeptide" id="PRO_0000026351" evidence="1">
    <location>
        <begin position="135"/>
        <end position="229"/>
    </location>
</feature>
<feature type="chain" id="PRO_0000026352" description="Dipeptidyl peptidase 1 heavy chain">
    <location>
        <begin position="230"/>
        <end position="393"/>
    </location>
</feature>
<feature type="chain" id="PRO_0000026353" description="Dipeptidyl peptidase 1 light chain">
    <location>
        <begin position="394"/>
        <end position="462"/>
    </location>
</feature>
<feature type="active site" evidence="3">
    <location>
        <position position="257"/>
    </location>
</feature>
<feature type="active site" evidence="4">
    <location>
        <position position="404"/>
    </location>
</feature>
<feature type="active site" evidence="5">
    <location>
        <position position="426"/>
    </location>
</feature>
<feature type="binding site" evidence="1">
    <location>
        <position position="301"/>
    </location>
    <ligand>
        <name>chloride</name>
        <dbReference type="ChEBI" id="CHEBI:17996"/>
    </ligand>
</feature>
<feature type="binding site" evidence="1">
    <location>
        <position position="303"/>
    </location>
    <ligand>
        <name>chloride</name>
        <dbReference type="ChEBI" id="CHEBI:17996"/>
    </ligand>
</feature>
<feature type="binding site" evidence="1">
    <location>
        <position position="346"/>
    </location>
    <ligand>
        <name>chloride</name>
        <dbReference type="ChEBI" id="CHEBI:17996"/>
    </ligand>
</feature>
<feature type="glycosylation site" description="N-linked (GlcNAc...) asparagine" evidence="6">
    <location>
        <position position="29"/>
    </location>
</feature>
<feature type="glycosylation site" description="N-linked (GlcNAc...) asparagine" evidence="2">
    <location>
        <position position="53"/>
    </location>
</feature>
<feature type="glycosylation site" description="N-linked (GlcNAc...) asparagine" evidence="2">
    <location>
        <position position="144"/>
    </location>
</feature>
<feature type="glycosylation site" description="N-linked (GlcNAc...) asparagine" evidence="6">
    <location>
        <position position="275"/>
    </location>
</feature>
<feature type="disulfide bond" evidence="6">
    <location>
        <begin position="30"/>
        <end position="118"/>
    </location>
</feature>
<feature type="disulfide bond" evidence="6">
    <location>
        <begin position="54"/>
        <end position="136"/>
    </location>
</feature>
<feature type="disulfide bond" evidence="6">
    <location>
        <begin position="254"/>
        <end position="297"/>
    </location>
</feature>
<feature type="disulfide bond" evidence="6">
    <location>
        <begin position="290"/>
        <end position="330"/>
    </location>
</feature>
<feature type="disulfide bond" evidence="6">
    <location>
        <begin position="320"/>
        <end position="336"/>
    </location>
</feature>
<feature type="sequence conflict" description="In Ref. 3; AA sequence." evidence="9" ref="3">
    <original>C</original>
    <variation>E</variation>
    <location>
        <position position="30"/>
    </location>
</feature>
<feature type="sequence conflict" description="In Ref. 2." evidence="9" ref="2">
    <original>V</original>
    <variation>Y</variation>
    <location>
        <position position="129"/>
    </location>
</feature>
<feature type="sequence conflict" description="In Ref. 2." evidence="9" ref="2">
    <original>N</original>
    <variation>H</variation>
    <location>
        <position position="171"/>
    </location>
</feature>
<feature type="sequence conflict" description="In Ref. 2." evidence="9" ref="2">
    <original>EE</original>
    <variation>RR</variation>
    <location>
        <begin position="191"/>
        <end position="192"/>
    </location>
</feature>
<feature type="sequence conflict" description="In Ref. 2." evidence="9" ref="2">
    <original>L</original>
    <variation>I</variation>
    <location>
        <position position="263"/>
    </location>
</feature>
<feature type="helix" evidence="10">
    <location>
        <begin position="32"/>
        <end position="35"/>
    </location>
</feature>
<feature type="strand" evidence="10">
    <location>
        <begin position="36"/>
        <end position="43"/>
    </location>
</feature>
<feature type="strand" evidence="10">
    <location>
        <begin position="62"/>
        <end position="69"/>
    </location>
</feature>
<feature type="turn" evidence="10">
    <location>
        <begin position="70"/>
        <end position="72"/>
    </location>
</feature>
<feature type="strand" evidence="10">
    <location>
        <begin position="73"/>
        <end position="75"/>
    </location>
</feature>
<feature type="strand" evidence="10">
    <location>
        <begin position="77"/>
        <end position="79"/>
    </location>
</feature>
<feature type="strand" evidence="10">
    <location>
        <begin position="81"/>
        <end position="87"/>
    </location>
</feature>
<feature type="turn" evidence="10">
    <location>
        <begin position="88"/>
        <end position="90"/>
    </location>
</feature>
<feature type="strand" evidence="10">
    <location>
        <begin position="91"/>
        <end position="96"/>
    </location>
</feature>
<feature type="strand" evidence="10">
    <location>
        <begin position="99"/>
        <end position="110"/>
    </location>
</feature>
<feature type="strand" evidence="10">
    <location>
        <begin position="113"/>
        <end position="121"/>
    </location>
</feature>
<feature type="strand" evidence="10">
    <location>
        <begin position="123"/>
        <end position="128"/>
    </location>
</feature>
<feature type="strand" evidence="10">
    <location>
        <begin position="133"/>
        <end position="141"/>
    </location>
</feature>
<feature type="strand" evidence="10">
    <location>
        <begin position="253"/>
        <end position="255"/>
    </location>
</feature>
<feature type="helix" evidence="10">
    <location>
        <begin position="257"/>
        <end position="273"/>
    </location>
</feature>
<feature type="turn" evidence="10">
    <location>
        <begin position="274"/>
        <end position="276"/>
    </location>
</feature>
<feature type="helix" evidence="10">
    <location>
        <begin position="284"/>
        <end position="290"/>
    </location>
</feature>
<feature type="helix" evidence="10">
    <location>
        <begin position="302"/>
        <end position="305"/>
    </location>
</feature>
<feature type="helix" evidence="10">
    <location>
        <begin position="308"/>
        <end position="312"/>
    </location>
</feature>
<feature type="strand" evidence="10">
    <location>
        <begin position="315"/>
        <end position="317"/>
    </location>
</feature>
<feature type="helix" evidence="10">
    <location>
        <begin position="318"/>
        <end position="320"/>
    </location>
</feature>
<feature type="strand" evidence="10">
    <location>
        <begin position="338"/>
        <end position="346"/>
    </location>
</feature>
<feature type="helix" evidence="10">
    <location>
        <begin position="356"/>
        <end position="366"/>
    </location>
</feature>
<feature type="strand" evidence="10">
    <location>
        <begin position="369"/>
        <end position="373"/>
    </location>
</feature>
<feature type="helix" evidence="10">
    <location>
        <begin position="377"/>
        <end position="380"/>
    </location>
</feature>
<feature type="strand" evidence="10">
    <location>
        <begin position="384"/>
        <end position="387"/>
    </location>
</feature>
<feature type="strand" evidence="10">
    <location>
        <begin position="404"/>
        <end position="413"/>
    </location>
</feature>
<feature type="turn" evidence="10">
    <location>
        <begin position="415"/>
        <end position="417"/>
    </location>
</feature>
<feature type="strand" evidence="10">
    <location>
        <begin position="420"/>
        <end position="425"/>
    </location>
</feature>
<feature type="strand" evidence="10">
    <location>
        <begin position="437"/>
        <end position="441"/>
    </location>
</feature>
<feature type="helix" evidence="10">
    <location>
        <begin position="446"/>
        <end position="448"/>
    </location>
</feature>
<feature type="strand" evidence="10">
    <location>
        <begin position="454"/>
        <end position="459"/>
    </location>
</feature>
<dbReference type="EC" id="3.4.14.1" evidence="8"/>
<dbReference type="EMBL" id="D90404">
    <property type="protein sequence ID" value="BAA14400.1"/>
    <property type="molecule type" value="mRNA"/>
</dbReference>
<dbReference type="PIR" id="A41158">
    <property type="entry name" value="A41158"/>
</dbReference>
<dbReference type="RefSeq" id="NP_058793.1">
    <property type="nucleotide sequence ID" value="NM_017097.2"/>
</dbReference>
<dbReference type="PDB" id="1JQP">
    <property type="method" value="X-ray"/>
    <property type="resolution" value="2.40 A"/>
    <property type="chains" value="A=25-462"/>
</dbReference>
<dbReference type="PDBsum" id="1JQP"/>
<dbReference type="SMR" id="P80067"/>
<dbReference type="FunCoup" id="P80067">
    <property type="interactions" value="607"/>
</dbReference>
<dbReference type="STRING" id="10116.ENSRNOP00000022342"/>
<dbReference type="BindingDB" id="P80067"/>
<dbReference type="ChEMBL" id="CHEMBL3308944"/>
<dbReference type="GuidetoPHARMACOLOGY" id="2344"/>
<dbReference type="MEROPS" id="C01.070"/>
<dbReference type="GlyCosmos" id="P80067">
    <property type="glycosylation" value="4 sites, No reported glycans"/>
</dbReference>
<dbReference type="GlyGen" id="P80067">
    <property type="glycosylation" value="5 sites"/>
</dbReference>
<dbReference type="iPTMnet" id="P80067"/>
<dbReference type="PhosphoSitePlus" id="P80067"/>
<dbReference type="PaxDb" id="10116-ENSRNOP00000022342"/>
<dbReference type="Ensembl" id="ENSRNOT00000022342.6">
    <property type="protein sequence ID" value="ENSRNOP00000022342.3"/>
    <property type="gene ID" value="ENSRNOG00000016496.8"/>
</dbReference>
<dbReference type="GeneID" id="25423"/>
<dbReference type="KEGG" id="rno:25423"/>
<dbReference type="AGR" id="RGD:2445"/>
<dbReference type="CTD" id="1075"/>
<dbReference type="RGD" id="2445">
    <property type="gene designation" value="Ctsc"/>
</dbReference>
<dbReference type="eggNOG" id="KOG1543">
    <property type="taxonomic scope" value="Eukaryota"/>
</dbReference>
<dbReference type="GeneTree" id="ENSGT00940000155787"/>
<dbReference type="HOGENOM" id="CLU_048219_0_0_1"/>
<dbReference type="InParanoid" id="P80067"/>
<dbReference type="OMA" id="NAVQKSW"/>
<dbReference type="OrthoDB" id="21642at9989"/>
<dbReference type="PhylomeDB" id="P80067"/>
<dbReference type="TreeFam" id="TF313225"/>
<dbReference type="BRENDA" id="3.4.14.1">
    <property type="organism ID" value="5301"/>
</dbReference>
<dbReference type="Reactome" id="R-RNO-204005">
    <property type="pathway name" value="COPII-mediated vesicle transport"/>
</dbReference>
<dbReference type="Reactome" id="R-RNO-2132295">
    <property type="pathway name" value="MHC class II antigen presentation"/>
</dbReference>
<dbReference type="Reactome" id="R-RNO-5694530">
    <property type="pathway name" value="Cargo concentration in the ER"/>
</dbReference>
<dbReference type="Reactome" id="R-RNO-6798695">
    <property type="pathway name" value="Neutrophil degranulation"/>
</dbReference>
<dbReference type="SABIO-RK" id="P80067"/>
<dbReference type="EvolutionaryTrace" id="P80067"/>
<dbReference type="PRO" id="PR:P80067"/>
<dbReference type="Proteomes" id="UP000002494">
    <property type="component" value="Chromosome 1"/>
</dbReference>
<dbReference type="Bgee" id="ENSRNOG00000016496">
    <property type="expression patterns" value="Expressed in liver and 19 other cell types or tissues"/>
</dbReference>
<dbReference type="GO" id="GO:0005813">
    <property type="term" value="C:centrosome"/>
    <property type="evidence" value="ECO:0007669"/>
    <property type="project" value="Ensembl"/>
</dbReference>
<dbReference type="GO" id="GO:0005737">
    <property type="term" value="C:cytoplasm"/>
    <property type="evidence" value="ECO:0000266"/>
    <property type="project" value="RGD"/>
</dbReference>
<dbReference type="GO" id="GO:0005615">
    <property type="term" value="C:extracellular space"/>
    <property type="evidence" value="ECO:0000318"/>
    <property type="project" value="GO_Central"/>
</dbReference>
<dbReference type="GO" id="GO:0005764">
    <property type="term" value="C:lysosome"/>
    <property type="evidence" value="ECO:0000314"/>
    <property type="project" value="ParkinsonsUK-UCL"/>
</dbReference>
<dbReference type="GO" id="GO:0005654">
    <property type="term" value="C:nucleoplasm"/>
    <property type="evidence" value="ECO:0007669"/>
    <property type="project" value="Ensembl"/>
</dbReference>
<dbReference type="GO" id="GO:0031404">
    <property type="term" value="F:chloride ion binding"/>
    <property type="evidence" value="ECO:0000314"/>
    <property type="project" value="RGD"/>
</dbReference>
<dbReference type="GO" id="GO:0004197">
    <property type="term" value="F:cysteine-type endopeptidase activity"/>
    <property type="evidence" value="ECO:0000318"/>
    <property type="project" value="GO_Central"/>
</dbReference>
<dbReference type="GO" id="GO:0008234">
    <property type="term" value="F:cysteine-type peptidase activity"/>
    <property type="evidence" value="ECO:0000266"/>
    <property type="project" value="RGD"/>
</dbReference>
<dbReference type="GO" id="GO:0008239">
    <property type="term" value="F:dipeptidyl-peptidase activity"/>
    <property type="evidence" value="ECO:0007669"/>
    <property type="project" value="UniProtKB-EC"/>
</dbReference>
<dbReference type="GO" id="GO:0042802">
    <property type="term" value="F:identical protein binding"/>
    <property type="evidence" value="ECO:0000314"/>
    <property type="project" value="RGD"/>
</dbReference>
<dbReference type="GO" id="GO:0016505">
    <property type="term" value="F:peptidase activator activity involved in apoptotic process"/>
    <property type="evidence" value="ECO:0000266"/>
    <property type="project" value="RGD"/>
</dbReference>
<dbReference type="GO" id="GO:0019902">
    <property type="term" value="F:phosphatase binding"/>
    <property type="evidence" value="ECO:0000353"/>
    <property type="project" value="ParkinsonsUK-UCL"/>
</dbReference>
<dbReference type="GO" id="GO:0051087">
    <property type="term" value="F:protein-folding chaperone binding"/>
    <property type="evidence" value="ECO:0000353"/>
    <property type="project" value="ParkinsonsUK-UCL"/>
</dbReference>
<dbReference type="GO" id="GO:0004252">
    <property type="term" value="F:serine-type endopeptidase activity"/>
    <property type="evidence" value="ECO:0000266"/>
    <property type="project" value="RGD"/>
</dbReference>
<dbReference type="GO" id="GO:0031642">
    <property type="term" value="P:negative regulation of myelination"/>
    <property type="evidence" value="ECO:0000266"/>
    <property type="project" value="RGD"/>
</dbReference>
<dbReference type="GO" id="GO:2001235">
    <property type="term" value="P:positive regulation of apoptotic signaling pathway"/>
    <property type="evidence" value="ECO:0000266"/>
    <property type="project" value="RGD"/>
</dbReference>
<dbReference type="GO" id="GO:1903980">
    <property type="term" value="P:positive regulation of microglial cell activation"/>
    <property type="evidence" value="ECO:0000266"/>
    <property type="project" value="RGD"/>
</dbReference>
<dbReference type="GO" id="GO:1903052">
    <property type="term" value="P:positive regulation of proteolysis involved in protein catabolic process"/>
    <property type="evidence" value="ECO:0000314"/>
    <property type="project" value="ParkinsonsUK-UCL"/>
</dbReference>
<dbReference type="GO" id="GO:0006508">
    <property type="term" value="P:proteolysis"/>
    <property type="evidence" value="ECO:0000266"/>
    <property type="project" value="RGD"/>
</dbReference>
<dbReference type="GO" id="GO:0051603">
    <property type="term" value="P:proteolysis involved in protein catabolic process"/>
    <property type="evidence" value="ECO:0000318"/>
    <property type="project" value="GO_Central"/>
</dbReference>
<dbReference type="GO" id="GO:0001913">
    <property type="term" value="P:T cell mediated cytotoxicity"/>
    <property type="evidence" value="ECO:0000266"/>
    <property type="project" value="RGD"/>
</dbReference>
<dbReference type="CDD" id="cd02621">
    <property type="entry name" value="Peptidase_C1A_CathepsinC"/>
    <property type="match status" value="1"/>
</dbReference>
<dbReference type="FunFam" id="2.40.128.80:FF:000001">
    <property type="entry name" value="Dipeptidyl peptidase 1"/>
    <property type="match status" value="1"/>
</dbReference>
<dbReference type="FunFam" id="3.90.70.10:FF:000062">
    <property type="entry name" value="Dipeptidyl peptidase 1"/>
    <property type="match status" value="1"/>
</dbReference>
<dbReference type="Gene3D" id="2.40.128.80">
    <property type="entry name" value="Cathepsin C, exclusion domain"/>
    <property type="match status" value="1"/>
</dbReference>
<dbReference type="Gene3D" id="3.90.70.10">
    <property type="entry name" value="Cysteine proteinases"/>
    <property type="match status" value="1"/>
</dbReference>
<dbReference type="InterPro" id="IPR039412">
    <property type="entry name" value="CatC"/>
</dbReference>
<dbReference type="InterPro" id="IPR014882">
    <property type="entry name" value="CathepsinC_exc"/>
</dbReference>
<dbReference type="InterPro" id="IPR036496">
    <property type="entry name" value="CathepsinC_exc_dom_sf"/>
</dbReference>
<dbReference type="InterPro" id="IPR038765">
    <property type="entry name" value="Papain-like_cys_pep_sf"/>
</dbReference>
<dbReference type="InterPro" id="IPR025661">
    <property type="entry name" value="Pept_asp_AS"/>
</dbReference>
<dbReference type="InterPro" id="IPR000169">
    <property type="entry name" value="Pept_cys_AS"/>
</dbReference>
<dbReference type="InterPro" id="IPR025660">
    <property type="entry name" value="Pept_his_AS"/>
</dbReference>
<dbReference type="InterPro" id="IPR013128">
    <property type="entry name" value="Peptidase_C1A"/>
</dbReference>
<dbReference type="InterPro" id="IPR000668">
    <property type="entry name" value="Peptidase_C1A_C"/>
</dbReference>
<dbReference type="PANTHER" id="PTHR12411">
    <property type="entry name" value="CYSTEINE PROTEASE FAMILY C1-RELATED"/>
    <property type="match status" value="1"/>
</dbReference>
<dbReference type="Pfam" id="PF08773">
    <property type="entry name" value="CathepsinC_exc"/>
    <property type="match status" value="1"/>
</dbReference>
<dbReference type="Pfam" id="PF00112">
    <property type="entry name" value="Peptidase_C1"/>
    <property type="match status" value="1"/>
</dbReference>
<dbReference type="PRINTS" id="PR00705">
    <property type="entry name" value="PAPAIN"/>
</dbReference>
<dbReference type="SMART" id="SM00645">
    <property type="entry name" value="Pept_C1"/>
    <property type="match status" value="1"/>
</dbReference>
<dbReference type="SUPFAM" id="SSF54001">
    <property type="entry name" value="Cysteine proteinases"/>
    <property type="match status" value="1"/>
</dbReference>
<dbReference type="SUPFAM" id="SSF75001">
    <property type="entry name" value="Dipeptidyl peptidase I (cathepsin C), exclusion domain"/>
    <property type="match status" value="1"/>
</dbReference>
<dbReference type="PROSITE" id="PS00640">
    <property type="entry name" value="THIOL_PROTEASE_ASN"/>
    <property type="match status" value="1"/>
</dbReference>
<dbReference type="PROSITE" id="PS00139">
    <property type="entry name" value="THIOL_PROTEASE_CYS"/>
    <property type="match status" value="1"/>
</dbReference>
<dbReference type="PROSITE" id="PS00639">
    <property type="entry name" value="THIOL_PROTEASE_HIS"/>
    <property type="match status" value="1"/>
</dbReference>
<reference key="1">
    <citation type="journal article" date="1991" name="J. Biol. Chem.">
        <title>Molecular cloning of cDNA for rat cathepsin C. Cathepsin C, a cysteine proteinase with an extremely long propeptide.</title>
        <authorList>
            <person name="Ishidoh K."/>
            <person name="Muno D."/>
            <person name="Sato N."/>
            <person name="Kominami E."/>
        </authorList>
    </citation>
    <scope>NUCLEOTIDE SEQUENCE [MRNA]</scope>
</reference>
<reference key="2">
    <citation type="journal article" date="1992" name="Biol. Chem. Hoppe-Seyler">
        <title>The primary structure and tissue distribution of cathepsin C.</title>
        <authorList>
            <person name="Kominami E."/>
            <person name="Ishidoh K."/>
            <person name="Muno D."/>
            <person name="Sato N."/>
        </authorList>
    </citation>
    <scope>NUCLEOTIDE SEQUENCE [MRNA]</scope>
    <scope>TISSUE SPECIFICITY</scope>
    <source>
        <strain>Wistar</strain>
        <tissue>Kidney</tissue>
    </source>
</reference>
<reference key="3">
    <citation type="journal article" date="1992" name="Eur. J. Biochem.">
        <title>Purification and characterization of cathepsin J from rat liver.</title>
        <authorList>
            <person name="Nikawa T."/>
            <person name="Towatari T."/>
            <person name="Katunuma N."/>
        </authorList>
    </citation>
    <scope>PROTEIN SEQUENCE OF 25-47; 230-251 AND 393-427</scope>
    <scope>FUNCTION</scope>
    <scope>CATALYTIC ACTIVITY</scope>
    <scope>SUBCELLULAR LOCATION</scope>
    <source>
        <tissue>Liver</tissue>
    </source>
</reference>
<reference key="4">
    <citation type="journal article" date="2001" name="FEBS Lett.">
        <title>Tetrameric dipeptidyl peptidase I directs substrate specificity by use of the residual pro-part domain.</title>
        <authorList>
            <person name="Olsen J.G."/>
            <person name="Kadziola A."/>
            <person name="Lauritzen C."/>
            <person name="Pedersen J."/>
            <person name="Larsen S."/>
            <person name="Dahl S.W."/>
        </authorList>
    </citation>
    <scope>X-RAY CRYSTALLOGRAPHY (2.4 ANGSTROMS) OF 25-462</scope>
    <scope>SUBUNIT</scope>
    <scope>GLYCOSYLATION AT ASN-29 AND ASN-275</scope>
    <scope>DISULFIDE BONDS</scope>
</reference>
<accession>P80067</accession>
<accession>P80068</accession>
<name>CATC_RAT</name>
<comment type="function">
    <text evidence="1 8">Thiol protease (PubMed:1740150). Has dipeptidylpeptidase activity (PubMed:1740150). Active against a broad range of dipeptide substrates composed of both polar and hydrophobic amino acids. Proline cannot occupy the P1 position and arginine cannot occupy the P2 position of the substrate (PubMed:1740150). Can act as both an exopeptidase and endopeptidase (By similarity). Activates serine proteases such as elastase, cathepsin G and granzymes A and B (By similarity).</text>
</comment>
<comment type="catalytic activity">
    <reaction evidence="8">
        <text>Release of an N-terminal dipeptide, Xaa-Yaa-|-Zaa-, except when Xaa is Arg or Lys, or Yaa or Zaa is Pro.</text>
        <dbReference type="EC" id="3.4.14.1"/>
    </reaction>
</comment>
<comment type="cofactor">
    <cofactor evidence="1">
        <name>chloride</name>
        <dbReference type="ChEBI" id="CHEBI:17996"/>
    </cofactor>
    <text evidence="1">Binds 1 Cl(-) ion per heavy chain.</text>
</comment>
<comment type="subunit">
    <text evidence="6">Tetramer of heterotrimers consisting of exclusion domain, heavy- and light chains.</text>
</comment>
<comment type="subcellular location">
    <subcellularLocation>
        <location evidence="8">Lysosome</location>
    </subcellularLocation>
</comment>
<comment type="tissue specificity">
    <text evidence="7">Broadly distributed, but higher levels found in liver, spleen, intestine, lung and kidney.</text>
</comment>
<comment type="similarity">
    <text evidence="3 4 5">Belongs to the peptidase C1 family.</text>
</comment>
<sequence length="462" mass="52235">MGPWTHSLRAALLLVLLGVCTVSSDTPANCTYPDLLGTWVFQVGPRHPRSHINCSVMEPTEEKVVIHLKKLDTAYDEVGNSGYFTLIYNQGFEIVLNDYKWFAFFKYEVKGSRAISYCHETMTGWVHDVLGRNWACFVGKKMANHSEKVYVNVAHLGGLQEKYSERLYSHNHNFVKAINSVQKSWTATTYEEYEKLSIRDLIRRSGHSGRILRPKPAPITDEIQQQILSLPESWDWRNVRGINFVSPVRNQESCGSCYSFASLGMLEARIRILTNNSQTPILSPQEVVSCSPYAQGCDGGFPYLIAGKYAQDFGVVEENCFPYTATDAPCKPKENCLRYYSSEYYYVGGFYGGCNEALMKLELVKHGPMAVAFEVHDDFLHYHSGIYHHTGLSDPFNPFELTNHAVLLVGYGKDPVTGLDYWIVKNSWGSQWGESGYFRIRRGTDECAIESIAMAAIPIPKL</sequence>